<sequence length="544" mass="57425">MAKEIKFSEEARRAMLRGVDALADAVKVTLGPKGRNVVLEKKFGSPLITNDGVTIAKEIELEDAFENMGAKLVAEVASKTNDVAGDGTTTATVLAQAMIREGLKNVTAGANPVGVRKGMEQAVAVAIENLKEISKPIEGKESIAQVAAISAADEEVGSLIAEAMERVGNDGVITIEESKGFTTELEVVEGMQFDRGYASPYMVTDSDKMEAVLDNPYILITDKKITNIQEILPVLEQVVQQGKPLLLIAEDVEGEALATLVVNKLRGTFNAVAVKAPGFGDRRKAMLEDIAVLTGGEVITEDLGLDLKSTQIAQLGRASKVVVTKENTTIVEGAGETDKISARVTQIRAQVEETTSEFDREKLQERLAKLAGGVAVIKVGAATETELKERKLRIEDALNSTRAAVEEGIVSGGGTALVNVYNKVAAVEAEGDAQTGINIVLRALEEPIRQIAHNAGLEGSVIVERLKNEEIGVGFNAATGEWVNMIEKGIVDPTKVTRSALQNAASVAAMFLTTEAVVADKPEENGGGAGMPDMGGMGGMGGMM</sequence>
<feature type="initiator methionine" description="Removed" evidence="2 4">
    <location>
        <position position="1"/>
    </location>
</feature>
<feature type="chain" id="PRO_0000063279" description="Chaperonin GroEL">
    <location>
        <begin position="2"/>
        <end position="544"/>
    </location>
</feature>
<feature type="binding site" evidence="1">
    <location>
        <begin position="29"/>
        <end position="32"/>
    </location>
    <ligand>
        <name>ATP</name>
        <dbReference type="ChEBI" id="CHEBI:30616"/>
    </ligand>
</feature>
<feature type="binding site" evidence="1">
    <location>
        <begin position="86"/>
        <end position="90"/>
    </location>
    <ligand>
        <name>ATP</name>
        <dbReference type="ChEBI" id="CHEBI:30616"/>
    </ligand>
</feature>
<feature type="binding site" evidence="1">
    <location>
        <position position="413"/>
    </location>
    <ligand>
        <name>ATP</name>
        <dbReference type="ChEBI" id="CHEBI:30616"/>
    </ligand>
</feature>
<feature type="binding site" evidence="1">
    <location>
        <begin position="476"/>
        <end position="478"/>
    </location>
    <ligand>
        <name>ATP</name>
        <dbReference type="ChEBI" id="CHEBI:30616"/>
    </ligand>
</feature>
<feature type="binding site" evidence="1">
    <location>
        <position position="492"/>
    </location>
    <ligand>
        <name>ATP</name>
        <dbReference type="ChEBI" id="CHEBI:30616"/>
    </ligand>
</feature>
<feature type="sequence conflict" description="In Ref. 3; BAA22519." evidence="5" ref="3">
    <original>M</original>
    <variation>N</variation>
    <location>
        <position position="15"/>
    </location>
</feature>
<feature type="sequence conflict" description="In Ref. 3; BAA22519." evidence="5" ref="3">
    <original>V</original>
    <variation>L</variation>
    <location>
        <position position="125"/>
    </location>
</feature>
<feature type="sequence conflict" description="In Ref. 3; BAA22519." evidence="5" ref="3">
    <original>M</original>
    <variation>L</variation>
    <location>
        <position position="202"/>
    </location>
</feature>
<feature type="sequence conflict" description="In Ref. 3; BAA22519." evidence="5" ref="3">
    <original>A</original>
    <variation>R</variation>
    <location>
        <position position="375"/>
    </location>
</feature>
<gene>
    <name evidence="1" type="primary">groEL</name>
    <name evidence="1" type="synonym">groL</name>
    <name type="synonym">mopA</name>
    <name type="ordered locus">BSU06030</name>
</gene>
<reference key="1">
    <citation type="journal article" date="1992" name="J. Bacteriol.">
        <title>Cloning, sequencing, mapping, and transcriptional analysis of the groESL operon from Bacillus subtilis.</title>
        <authorList>
            <person name="Schmidt A."/>
            <person name="Schiesswohl M."/>
            <person name="Voelker U."/>
            <person name="Hecker M."/>
            <person name="Schumann W."/>
        </authorList>
    </citation>
    <scope>NUCLEOTIDE SEQUENCE [GENOMIC DNA]</scope>
</reference>
<reference key="2">
    <citation type="journal article" date="1992" name="J. Bacteriol.">
        <title>Cloning and characterization of the groESL operon from Bacillus subtilis.</title>
        <authorList>
            <person name="Li M."/>
            <person name="Wong S.L."/>
        </authorList>
    </citation>
    <scope>NUCLEOTIDE SEQUENCE [GENOMIC DNA]</scope>
    <source>
        <strain>168</strain>
    </source>
</reference>
<reference key="3">
    <citation type="journal article" date="1992" name="Biosci. Biotechnol. Biochem.">
        <title>Isolation and characterization of the groES and groEL genes of Bacillus subtilis Marburg.</title>
        <authorList>
            <person name="Tozawa Y."/>
            <person name="Yoshikawa H."/>
            <person name="Kawamura F."/>
            <person name="Itaya M."/>
            <person name="Takahashi H."/>
        </authorList>
    </citation>
    <scope>NUCLEOTIDE SEQUENCE [GENOMIC DNA]</scope>
    <source>
        <strain>168 / Marburg / ATCC 6051 / DSM 10 / JCM 1465 / NBRC 13719 / NCIMB 3610 / NRRL NRS-744 / VKM B-501</strain>
    </source>
</reference>
<reference key="4">
    <citation type="journal article" date="1997" name="DNA Res.">
        <title>Sequence analysis of the groESL-cotA region of the Bacillus subtilis genome, containing the restriction/modification system genes.</title>
        <authorList>
            <person name="Kasahara Y."/>
            <person name="Nakai S."/>
            <person name="Ogasawara N."/>
            <person name="Yata K."/>
            <person name="Sadaie Y."/>
        </authorList>
    </citation>
    <scope>NUCLEOTIDE SEQUENCE [GENOMIC DNA]</scope>
    <source>
        <strain>168 / Marburg / ATCC 6051 / DSM 10 / JCM 1465 / NBRC 13719 / NCIMB 3610 / NRRL NRS-744 / VKM B-501</strain>
    </source>
</reference>
<reference key="5">
    <citation type="journal article" date="1997" name="Nature">
        <title>The complete genome sequence of the Gram-positive bacterium Bacillus subtilis.</title>
        <authorList>
            <person name="Kunst F."/>
            <person name="Ogasawara N."/>
            <person name="Moszer I."/>
            <person name="Albertini A.M."/>
            <person name="Alloni G."/>
            <person name="Azevedo V."/>
            <person name="Bertero M.G."/>
            <person name="Bessieres P."/>
            <person name="Bolotin A."/>
            <person name="Borchert S."/>
            <person name="Borriss R."/>
            <person name="Boursier L."/>
            <person name="Brans A."/>
            <person name="Braun M."/>
            <person name="Brignell S.C."/>
            <person name="Bron S."/>
            <person name="Brouillet S."/>
            <person name="Bruschi C.V."/>
            <person name="Caldwell B."/>
            <person name="Capuano V."/>
            <person name="Carter N.M."/>
            <person name="Choi S.-K."/>
            <person name="Codani J.-J."/>
            <person name="Connerton I.F."/>
            <person name="Cummings N.J."/>
            <person name="Daniel R.A."/>
            <person name="Denizot F."/>
            <person name="Devine K.M."/>
            <person name="Duesterhoeft A."/>
            <person name="Ehrlich S.D."/>
            <person name="Emmerson P.T."/>
            <person name="Entian K.-D."/>
            <person name="Errington J."/>
            <person name="Fabret C."/>
            <person name="Ferrari E."/>
            <person name="Foulger D."/>
            <person name="Fritz C."/>
            <person name="Fujita M."/>
            <person name="Fujita Y."/>
            <person name="Fuma S."/>
            <person name="Galizzi A."/>
            <person name="Galleron N."/>
            <person name="Ghim S.-Y."/>
            <person name="Glaser P."/>
            <person name="Goffeau A."/>
            <person name="Golightly E.J."/>
            <person name="Grandi G."/>
            <person name="Guiseppi G."/>
            <person name="Guy B.J."/>
            <person name="Haga K."/>
            <person name="Haiech J."/>
            <person name="Harwood C.R."/>
            <person name="Henaut A."/>
            <person name="Hilbert H."/>
            <person name="Holsappel S."/>
            <person name="Hosono S."/>
            <person name="Hullo M.-F."/>
            <person name="Itaya M."/>
            <person name="Jones L.-M."/>
            <person name="Joris B."/>
            <person name="Karamata D."/>
            <person name="Kasahara Y."/>
            <person name="Klaerr-Blanchard M."/>
            <person name="Klein C."/>
            <person name="Kobayashi Y."/>
            <person name="Koetter P."/>
            <person name="Koningstein G."/>
            <person name="Krogh S."/>
            <person name="Kumano M."/>
            <person name="Kurita K."/>
            <person name="Lapidus A."/>
            <person name="Lardinois S."/>
            <person name="Lauber J."/>
            <person name="Lazarevic V."/>
            <person name="Lee S.-M."/>
            <person name="Levine A."/>
            <person name="Liu H."/>
            <person name="Masuda S."/>
            <person name="Mauel C."/>
            <person name="Medigue C."/>
            <person name="Medina N."/>
            <person name="Mellado R.P."/>
            <person name="Mizuno M."/>
            <person name="Moestl D."/>
            <person name="Nakai S."/>
            <person name="Noback M."/>
            <person name="Noone D."/>
            <person name="O'Reilly M."/>
            <person name="Ogawa K."/>
            <person name="Ogiwara A."/>
            <person name="Oudega B."/>
            <person name="Park S.-H."/>
            <person name="Parro V."/>
            <person name="Pohl T.M."/>
            <person name="Portetelle D."/>
            <person name="Porwollik S."/>
            <person name="Prescott A.M."/>
            <person name="Presecan E."/>
            <person name="Pujic P."/>
            <person name="Purnelle B."/>
            <person name="Rapoport G."/>
            <person name="Rey M."/>
            <person name="Reynolds S."/>
            <person name="Rieger M."/>
            <person name="Rivolta C."/>
            <person name="Rocha E."/>
            <person name="Roche B."/>
            <person name="Rose M."/>
            <person name="Sadaie Y."/>
            <person name="Sato T."/>
            <person name="Scanlan E."/>
            <person name="Schleich S."/>
            <person name="Schroeter R."/>
            <person name="Scoffone F."/>
            <person name="Sekiguchi J."/>
            <person name="Sekowska A."/>
            <person name="Seror S.J."/>
            <person name="Serror P."/>
            <person name="Shin B.-S."/>
            <person name="Soldo B."/>
            <person name="Sorokin A."/>
            <person name="Tacconi E."/>
            <person name="Takagi T."/>
            <person name="Takahashi H."/>
            <person name="Takemaru K."/>
            <person name="Takeuchi M."/>
            <person name="Tamakoshi A."/>
            <person name="Tanaka T."/>
            <person name="Terpstra P."/>
            <person name="Tognoni A."/>
            <person name="Tosato V."/>
            <person name="Uchiyama S."/>
            <person name="Vandenbol M."/>
            <person name="Vannier F."/>
            <person name="Vassarotti A."/>
            <person name="Viari A."/>
            <person name="Wambutt R."/>
            <person name="Wedler E."/>
            <person name="Wedler H."/>
            <person name="Weitzenegger T."/>
            <person name="Winters P."/>
            <person name="Wipat A."/>
            <person name="Yamamoto H."/>
            <person name="Yamane K."/>
            <person name="Yasumoto K."/>
            <person name="Yata K."/>
            <person name="Yoshida K."/>
            <person name="Yoshikawa H.-F."/>
            <person name="Zumstein E."/>
            <person name="Yoshikawa H."/>
            <person name="Danchin A."/>
        </authorList>
    </citation>
    <scope>NUCLEOTIDE SEQUENCE [LARGE SCALE GENOMIC DNA]</scope>
    <source>
        <strain>168</strain>
    </source>
</reference>
<reference key="6">
    <citation type="journal article" date="1997" name="Microbiology">
        <title>Nucleotide sequence and analysis of the phoB-rrnE-groESL region of the Bacillus subtilis chromosome.</title>
        <authorList>
            <person name="Sadaie Y."/>
            <person name="Yata K."/>
            <person name="Fujita M."/>
            <person name="Sagai H."/>
            <person name="Itaya M."/>
            <person name="Kasahara Y."/>
            <person name="Ogasawara N."/>
        </authorList>
    </citation>
    <scope>NUCLEOTIDE SEQUENCE [GENOMIC DNA] OF 1-19</scope>
    <source>
        <strain>168 / JH642</strain>
    </source>
</reference>
<reference key="7">
    <citation type="journal article" date="1994" name="Microbiology">
        <title>Analysis of the induction of general stress proteins of Bacillus subtilis.</title>
        <authorList>
            <person name="Voelker U."/>
            <person name="Engelmann S."/>
            <person name="Maul B."/>
            <person name="Riethdorf S."/>
            <person name="Voelker A."/>
            <person name="Schmid R."/>
            <person name="Mach H."/>
            <person name="Hecker M."/>
        </authorList>
    </citation>
    <scope>PROTEIN SEQUENCE OF 2-31</scope>
    <source>
        <strain>168 / IS58</strain>
    </source>
</reference>
<reference key="8">
    <citation type="journal article" date="1992" name="J. Gen. Microbiol.">
        <title>Stress proteins and cross-protection by heat shock and salt stress in Bacillus subtilis.</title>
        <authorList>
            <person name="Voelker U."/>
            <person name="Mach H."/>
            <person name="Schmid R."/>
            <person name="Hecker M."/>
        </authorList>
    </citation>
    <scope>PROTEIN SEQUENCE OF 2-31</scope>
    <source>
        <strain>168 / IS58</strain>
    </source>
</reference>
<reference key="9">
    <citation type="journal article" date="2011" name="J. Bacteriol.">
        <title>Nonclassical protein secretion by Bacillus subtilis in the stationary phase is not due to cell lysis.</title>
        <authorList>
            <person name="Yang C.K."/>
            <person name="Ewis H.E."/>
            <person name="Zhang X."/>
            <person name="Lu C.D."/>
            <person name="Hu H.J."/>
            <person name="Pan Y."/>
            <person name="Abdelal A.T."/>
            <person name="Tai P.C."/>
        </authorList>
    </citation>
    <scope>PROTEIN SEQUENCE OF N-TERMINUS</scope>
    <scope>SUBCELLULAR LOCATION</scope>
    <source>
        <strain>168 / WB600BHM</strain>
    </source>
</reference>
<evidence type="ECO:0000255" key="1">
    <source>
        <dbReference type="HAMAP-Rule" id="MF_00600"/>
    </source>
</evidence>
<evidence type="ECO:0000269" key="2">
    <source>
    </source>
</evidence>
<evidence type="ECO:0000269" key="3">
    <source>
    </source>
</evidence>
<evidence type="ECO:0000269" key="4">
    <source>
    </source>
</evidence>
<evidence type="ECO:0000305" key="5"/>
<dbReference type="EC" id="5.6.1.7" evidence="1"/>
<dbReference type="EMBL" id="M84965">
    <property type="protein sequence ID" value="AAA22531.1"/>
    <property type="molecule type" value="Genomic_DNA"/>
</dbReference>
<dbReference type="EMBL" id="M81132">
    <property type="protein sequence ID" value="AAA22503.1"/>
    <property type="molecule type" value="Genomic_DNA"/>
</dbReference>
<dbReference type="EMBL" id="D10972">
    <property type="protein sequence ID" value="BAA22519.1"/>
    <property type="molecule type" value="Genomic_DNA"/>
</dbReference>
<dbReference type="EMBL" id="AB007637">
    <property type="protein sequence ID" value="BAA22747.1"/>
    <property type="molecule type" value="Genomic_DNA"/>
</dbReference>
<dbReference type="EMBL" id="AL009126">
    <property type="protein sequence ID" value="CAB12422.1"/>
    <property type="molecule type" value="Genomic_DNA"/>
</dbReference>
<dbReference type="EMBL" id="D88802">
    <property type="protein sequence ID" value="BAA19727.1"/>
    <property type="molecule type" value="Genomic_DNA"/>
</dbReference>
<dbReference type="PIR" id="B41884">
    <property type="entry name" value="B41884"/>
</dbReference>
<dbReference type="RefSeq" id="NP_388484.1">
    <property type="nucleotide sequence ID" value="NC_000964.3"/>
</dbReference>
<dbReference type="RefSeq" id="WP_003243151.1">
    <property type="nucleotide sequence ID" value="NZ_OZ025638.1"/>
</dbReference>
<dbReference type="SMR" id="P28598"/>
<dbReference type="DIP" id="DIP-58540N"/>
<dbReference type="FunCoup" id="P28598">
    <property type="interactions" value="674"/>
</dbReference>
<dbReference type="IntAct" id="P28598">
    <property type="interactions" value="1"/>
</dbReference>
<dbReference type="STRING" id="224308.BSU06030"/>
<dbReference type="jPOST" id="P28598"/>
<dbReference type="PaxDb" id="224308-BSU06030"/>
<dbReference type="EnsemblBacteria" id="CAB12422">
    <property type="protein sequence ID" value="CAB12422"/>
    <property type="gene ID" value="BSU_06030"/>
</dbReference>
<dbReference type="GeneID" id="938045"/>
<dbReference type="KEGG" id="bsu:BSU06030"/>
<dbReference type="PATRIC" id="fig|224308.179.peg.648"/>
<dbReference type="eggNOG" id="COG0459">
    <property type="taxonomic scope" value="Bacteria"/>
</dbReference>
<dbReference type="InParanoid" id="P28598"/>
<dbReference type="OrthoDB" id="9766614at2"/>
<dbReference type="PhylomeDB" id="P28598"/>
<dbReference type="BioCyc" id="BSUB:BSU06030-MONOMER"/>
<dbReference type="Proteomes" id="UP000001570">
    <property type="component" value="Chromosome"/>
</dbReference>
<dbReference type="GO" id="GO:0005576">
    <property type="term" value="C:extracellular region"/>
    <property type="evidence" value="ECO:0007669"/>
    <property type="project" value="UniProtKB-SubCell"/>
</dbReference>
<dbReference type="GO" id="GO:1990220">
    <property type="term" value="C:GroEL-GroES complex"/>
    <property type="evidence" value="ECO:0000318"/>
    <property type="project" value="GO_Central"/>
</dbReference>
<dbReference type="GO" id="GO:0005524">
    <property type="term" value="F:ATP binding"/>
    <property type="evidence" value="ECO:0000318"/>
    <property type="project" value="GO_Central"/>
</dbReference>
<dbReference type="GO" id="GO:0140662">
    <property type="term" value="F:ATP-dependent protein folding chaperone"/>
    <property type="evidence" value="ECO:0007669"/>
    <property type="project" value="InterPro"/>
</dbReference>
<dbReference type="GO" id="GO:0016853">
    <property type="term" value="F:isomerase activity"/>
    <property type="evidence" value="ECO:0007669"/>
    <property type="project" value="UniProtKB-KW"/>
</dbReference>
<dbReference type="GO" id="GO:0051082">
    <property type="term" value="F:unfolded protein binding"/>
    <property type="evidence" value="ECO:0000318"/>
    <property type="project" value="GO_Central"/>
</dbReference>
<dbReference type="GO" id="GO:0051085">
    <property type="term" value="P:chaperone cofactor-dependent protein refolding"/>
    <property type="evidence" value="ECO:0000318"/>
    <property type="project" value="GO_Central"/>
</dbReference>
<dbReference type="GO" id="GO:0042026">
    <property type="term" value="P:protein refolding"/>
    <property type="evidence" value="ECO:0007669"/>
    <property type="project" value="UniProtKB-UniRule"/>
</dbReference>
<dbReference type="GO" id="GO:0009408">
    <property type="term" value="P:response to heat"/>
    <property type="evidence" value="ECO:0000318"/>
    <property type="project" value="GO_Central"/>
</dbReference>
<dbReference type="CDD" id="cd03344">
    <property type="entry name" value="GroEL"/>
    <property type="match status" value="1"/>
</dbReference>
<dbReference type="FunFam" id="1.10.560.10:FF:000001">
    <property type="entry name" value="60 kDa chaperonin"/>
    <property type="match status" value="1"/>
</dbReference>
<dbReference type="FunFam" id="3.50.7.10:FF:000001">
    <property type="entry name" value="60 kDa chaperonin"/>
    <property type="match status" value="1"/>
</dbReference>
<dbReference type="Gene3D" id="3.50.7.10">
    <property type="entry name" value="GroEL"/>
    <property type="match status" value="1"/>
</dbReference>
<dbReference type="Gene3D" id="1.10.560.10">
    <property type="entry name" value="GroEL-like equatorial domain"/>
    <property type="match status" value="1"/>
</dbReference>
<dbReference type="Gene3D" id="3.30.260.10">
    <property type="entry name" value="TCP-1-like chaperonin intermediate domain"/>
    <property type="match status" value="1"/>
</dbReference>
<dbReference type="HAMAP" id="MF_00600">
    <property type="entry name" value="CH60"/>
    <property type="match status" value="1"/>
</dbReference>
<dbReference type="InterPro" id="IPR018370">
    <property type="entry name" value="Chaperonin_Cpn60_CS"/>
</dbReference>
<dbReference type="InterPro" id="IPR001844">
    <property type="entry name" value="Cpn60/GroEL"/>
</dbReference>
<dbReference type="InterPro" id="IPR002423">
    <property type="entry name" value="Cpn60/GroEL/TCP-1"/>
</dbReference>
<dbReference type="InterPro" id="IPR027409">
    <property type="entry name" value="GroEL-like_apical_dom_sf"/>
</dbReference>
<dbReference type="InterPro" id="IPR027413">
    <property type="entry name" value="GROEL-like_equatorial_sf"/>
</dbReference>
<dbReference type="InterPro" id="IPR027410">
    <property type="entry name" value="TCP-1-like_intermed_sf"/>
</dbReference>
<dbReference type="NCBIfam" id="TIGR02348">
    <property type="entry name" value="GroEL"/>
    <property type="match status" value="1"/>
</dbReference>
<dbReference type="NCBIfam" id="NF000592">
    <property type="entry name" value="PRK00013.1"/>
    <property type="match status" value="1"/>
</dbReference>
<dbReference type="NCBIfam" id="NF009487">
    <property type="entry name" value="PRK12849.1"/>
    <property type="match status" value="1"/>
</dbReference>
<dbReference type="NCBIfam" id="NF009488">
    <property type="entry name" value="PRK12850.1"/>
    <property type="match status" value="1"/>
</dbReference>
<dbReference type="NCBIfam" id="NF009489">
    <property type="entry name" value="PRK12851.1"/>
    <property type="match status" value="1"/>
</dbReference>
<dbReference type="PANTHER" id="PTHR45633">
    <property type="entry name" value="60 KDA HEAT SHOCK PROTEIN, MITOCHONDRIAL"/>
    <property type="match status" value="1"/>
</dbReference>
<dbReference type="Pfam" id="PF00118">
    <property type="entry name" value="Cpn60_TCP1"/>
    <property type="match status" value="1"/>
</dbReference>
<dbReference type="PRINTS" id="PR00298">
    <property type="entry name" value="CHAPERONIN60"/>
</dbReference>
<dbReference type="SUPFAM" id="SSF52029">
    <property type="entry name" value="GroEL apical domain-like"/>
    <property type="match status" value="1"/>
</dbReference>
<dbReference type="SUPFAM" id="SSF48592">
    <property type="entry name" value="GroEL equatorial domain-like"/>
    <property type="match status" value="1"/>
</dbReference>
<dbReference type="SUPFAM" id="SSF54849">
    <property type="entry name" value="GroEL-intermediate domain like"/>
    <property type="match status" value="1"/>
</dbReference>
<dbReference type="PROSITE" id="PS00296">
    <property type="entry name" value="CHAPERONINS_CPN60"/>
    <property type="match status" value="1"/>
</dbReference>
<accession>P28598</accession>
<accession>O05526</accession>
<comment type="function">
    <text evidence="1">Together with its co-chaperonin GroES, plays an essential role in assisting protein folding. The GroEL-GroES system forms a nano-cage that allows encapsulation of the non-native substrate proteins and provides a physical environment optimized to promote and accelerate protein folding.</text>
</comment>
<comment type="catalytic activity">
    <reaction evidence="1">
        <text>ATP + H2O + a folded polypeptide = ADP + phosphate + an unfolded polypeptide.</text>
        <dbReference type="EC" id="5.6.1.7"/>
    </reaction>
</comment>
<comment type="subunit">
    <text evidence="1">Forms a cylinder of 14 subunits composed of two heptameric rings stacked back-to-back. Interacts with the co-chaperonin GroES.</text>
</comment>
<comment type="subcellular location">
    <subcellularLocation>
        <location evidence="1 3">Cytoplasm</location>
    </subcellularLocation>
    <subcellularLocation>
        <location evidence="3">Secreted</location>
    </subcellularLocation>
    <text evidence="3">Present in the cytoplasm early in growth, as cells become stationary protein also accumulates in the medium; secreted protein is not processed (PubMed:21856851).</text>
</comment>
<comment type="similarity">
    <text evidence="1">Belongs to the chaperonin (HSP60) family.</text>
</comment>
<name>CH60_BACSU</name>
<proteinExistence type="evidence at protein level"/>
<keyword id="KW-0067">ATP-binding</keyword>
<keyword id="KW-0143">Chaperone</keyword>
<keyword id="KW-0963">Cytoplasm</keyword>
<keyword id="KW-0903">Direct protein sequencing</keyword>
<keyword id="KW-0413">Isomerase</keyword>
<keyword id="KW-0547">Nucleotide-binding</keyword>
<keyword id="KW-1185">Reference proteome</keyword>
<keyword id="KW-0964">Secreted</keyword>
<keyword id="KW-0346">Stress response</keyword>
<protein>
    <recommendedName>
        <fullName evidence="1">Chaperonin GroEL</fullName>
        <ecNumber evidence="1">5.6.1.7</ecNumber>
    </recommendedName>
    <alternativeName>
        <fullName evidence="1">60 kDa chaperonin</fullName>
    </alternativeName>
    <alternativeName>
        <fullName evidence="1">Chaperonin-60</fullName>
        <shortName evidence="1">Cpn60</shortName>
    </alternativeName>
</protein>
<organism>
    <name type="scientific">Bacillus subtilis (strain 168)</name>
    <dbReference type="NCBI Taxonomy" id="224308"/>
    <lineage>
        <taxon>Bacteria</taxon>
        <taxon>Bacillati</taxon>
        <taxon>Bacillota</taxon>
        <taxon>Bacilli</taxon>
        <taxon>Bacillales</taxon>
        <taxon>Bacillaceae</taxon>
        <taxon>Bacillus</taxon>
    </lineage>
</organism>